<reference key="1">
    <citation type="journal article" date="2009" name="Proc. Natl. Acad. Sci. U.S.A.">
        <title>The genomic basis of trophic strategy in marine bacteria.</title>
        <authorList>
            <person name="Lauro F.M."/>
            <person name="McDougald D."/>
            <person name="Thomas T."/>
            <person name="Williams T.J."/>
            <person name="Egan S."/>
            <person name="Rice S."/>
            <person name="DeMaere M.Z."/>
            <person name="Ting L."/>
            <person name="Ertan H."/>
            <person name="Johnson J."/>
            <person name="Ferriera S."/>
            <person name="Lapidus A."/>
            <person name="Anderson I."/>
            <person name="Kyrpides N."/>
            <person name="Munk A.C."/>
            <person name="Detter C."/>
            <person name="Han C.S."/>
            <person name="Brown M.V."/>
            <person name="Robb F.T."/>
            <person name="Kjelleberg S."/>
            <person name="Cavicchioli R."/>
        </authorList>
    </citation>
    <scope>NUCLEOTIDE SEQUENCE [LARGE SCALE GENOMIC DNA]</scope>
    <source>
        <strain>DSM 13593 / LMG 18877 / RB2256</strain>
    </source>
</reference>
<feature type="chain" id="PRO_0000255375" description="Glycerol-3-phosphate dehydrogenase [NAD(P)+] 2">
    <location>
        <begin position="1"/>
        <end position="333"/>
    </location>
</feature>
<feature type="active site" description="Proton acceptor" evidence="1">
    <location>
        <position position="189"/>
    </location>
</feature>
<feature type="binding site" evidence="1">
    <location>
        <position position="12"/>
    </location>
    <ligand>
        <name>NADPH</name>
        <dbReference type="ChEBI" id="CHEBI:57783"/>
    </ligand>
</feature>
<feature type="binding site" evidence="1">
    <location>
        <position position="13"/>
    </location>
    <ligand>
        <name>NADPH</name>
        <dbReference type="ChEBI" id="CHEBI:57783"/>
    </ligand>
</feature>
<feature type="binding site" evidence="1">
    <location>
        <position position="32"/>
    </location>
    <ligand>
        <name>NADPH</name>
        <dbReference type="ChEBI" id="CHEBI:57783"/>
    </ligand>
</feature>
<feature type="binding site" evidence="1">
    <location>
        <position position="106"/>
    </location>
    <ligand>
        <name>NADPH</name>
        <dbReference type="ChEBI" id="CHEBI:57783"/>
    </ligand>
</feature>
<feature type="binding site" evidence="1">
    <location>
        <position position="106"/>
    </location>
    <ligand>
        <name>sn-glycerol 3-phosphate</name>
        <dbReference type="ChEBI" id="CHEBI:57597"/>
    </ligand>
</feature>
<feature type="binding site" evidence="1">
    <location>
        <position position="134"/>
    </location>
    <ligand>
        <name>sn-glycerol 3-phosphate</name>
        <dbReference type="ChEBI" id="CHEBI:57597"/>
    </ligand>
</feature>
<feature type="binding site" evidence="1">
    <location>
        <position position="138"/>
    </location>
    <ligand>
        <name>NADPH</name>
        <dbReference type="ChEBI" id="CHEBI:57783"/>
    </ligand>
</feature>
<feature type="binding site" evidence="1">
    <location>
        <position position="189"/>
    </location>
    <ligand>
        <name>sn-glycerol 3-phosphate</name>
        <dbReference type="ChEBI" id="CHEBI:57597"/>
    </ligand>
</feature>
<feature type="binding site" evidence="1">
    <location>
        <position position="242"/>
    </location>
    <ligand>
        <name>sn-glycerol 3-phosphate</name>
        <dbReference type="ChEBI" id="CHEBI:57597"/>
    </ligand>
</feature>
<feature type="binding site" evidence="1">
    <location>
        <position position="252"/>
    </location>
    <ligand>
        <name>sn-glycerol 3-phosphate</name>
        <dbReference type="ChEBI" id="CHEBI:57597"/>
    </ligand>
</feature>
<feature type="binding site" evidence="1">
    <location>
        <position position="253"/>
    </location>
    <ligand>
        <name>NADPH</name>
        <dbReference type="ChEBI" id="CHEBI:57783"/>
    </ligand>
</feature>
<feature type="binding site" evidence="1">
    <location>
        <position position="253"/>
    </location>
    <ligand>
        <name>sn-glycerol 3-phosphate</name>
        <dbReference type="ChEBI" id="CHEBI:57597"/>
    </ligand>
</feature>
<feature type="binding site" evidence="1">
    <location>
        <position position="254"/>
    </location>
    <ligand>
        <name>sn-glycerol 3-phosphate</name>
        <dbReference type="ChEBI" id="CHEBI:57597"/>
    </ligand>
</feature>
<feature type="binding site" evidence="1">
    <location>
        <position position="277"/>
    </location>
    <ligand>
        <name>NADPH</name>
        <dbReference type="ChEBI" id="CHEBI:57783"/>
    </ligand>
</feature>
<feature type="binding site" evidence="1">
    <location>
        <position position="279"/>
    </location>
    <ligand>
        <name>NADPH</name>
        <dbReference type="ChEBI" id="CHEBI:57783"/>
    </ligand>
</feature>
<dbReference type="EC" id="1.1.1.94" evidence="1"/>
<dbReference type="EMBL" id="CP000356">
    <property type="protein sequence ID" value="ABF51923.1"/>
    <property type="molecule type" value="Genomic_DNA"/>
</dbReference>
<dbReference type="RefSeq" id="WP_011540515.1">
    <property type="nucleotide sequence ID" value="NC_008048.1"/>
</dbReference>
<dbReference type="SMR" id="Q1GWP9"/>
<dbReference type="STRING" id="317655.Sala_0199"/>
<dbReference type="KEGG" id="sal:Sala_0199"/>
<dbReference type="eggNOG" id="COG0240">
    <property type="taxonomic scope" value="Bacteria"/>
</dbReference>
<dbReference type="HOGENOM" id="CLU_033449_0_2_5"/>
<dbReference type="OrthoDB" id="9812273at2"/>
<dbReference type="UniPathway" id="UPA00940"/>
<dbReference type="Proteomes" id="UP000006578">
    <property type="component" value="Chromosome"/>
</dbReference>
<dbReference type="GO" id="GO:0005829">
    <property type="term" value="C:cytosol"/>
    <property type="evidence" value="ECO:0007669"/>
    <property type="project" value="TreeGrafter"/>
</dbReference>
<dbReference type="GO" id="GO:0047952">
    <property type="term" value="F:glycerol-3-phosphate dehydrogenase [NAD(P)+] activity"/>
    <property type="evidence" value="ECO:0007669"/>
    <property type="project" value="UniProtKB-UniRule"/>
</dbReference>
<dbReference type="GO" id="GO:0051287">
    <property type="term" value="F:NAD binding"/>
    <property type="evidence" value="ECO:0007669"/>
    <property type="project" value="InterPro"/>
</dbReference>
<dbReference type="GO" id="GO:0005975">
    <property type="term" value="P:carbohydrate metabolic process"/>
    <property type="evidence" value="ECO:0007669"/>
    <property type="project" value="InterPro"/>
</dbReference>
<dbReference type="GO" id="GO:0046167">
    <property type="term" value="P:glycerol-3-phosphate biosynthetic process"/>
    <property type="evidence" value="ECO:0007669"/>
    <property type="project" value="UniProtKB-UniRule"/>
</dbReference>
<dbReference type="GO" id="GO:0046168">
    <property type="term" value="P:glycerol-3-phosphate catabolic process"/>
    <property type="evidence" value="ECO:0007669"/>
    <property type="project" value="InterPro"/>
</dbReference>
<dbReference type="GO" id="GO:0006650">
    <property type="term" value="P:glycerophospholipid metabolic process"/>
    <property type="evidence" value="ECO:0007669"/>
    <property type="project" value="UniProtKB-UniRule"/>
</dbReference>
<dbReference type="GO" id="GO:0008654">
    <property type="term" value="P:phospholipid biosynthetic process"/>
    <property type="evidence" value="ECO:0007669"/>
    <property type="project" value="UniProtKB-KW"/>
</dbReference>
<dbReference type="FunFam" id="1.10.1040.10:FF:000001">
    <property type="entry name" value="Glycerol-3-phosphate dehydrogenase [NAD(P)+]"/>
    <property type="match status" value="1"/>
</dbReference>
<dbReference type="FunFam" id="3.40.50.720:FF:000019">
    <property type="entry name" value="Glycerol-3-phosphate dehydrogenase [NAD(P)+]"/>
    <property type="match status" value="1"/>
</dbReference>
<dbReference type="Gene3D" id="1.10.1040.10">
    <property type="entry name" value="N-(1-d-carboxylethyl)-l-norvaline Dehydrogenase, domain 2"/>
    <property type="match status" value="1"/>
</dbReference>
<dbReference type="Gene3D" id="3.40.50.720">
    <property type="entry name" value="NAD(P)-binding Rossmann-like Domain"/>
    <property type="match status" value="1"/>
</dbReference>
<dbReference type="HAMAP" id="MF_00394">
    <property type="entry name" value="NAD_Glyc3P_dehydrog"/>
    <property type="match status" value="1"/>
</dbReference>
<dbReference type="InterPro" id="IPR008927">
    <property type="entry name" value="6-PGluconate_DH-like_C_sf"/>
</dbReference>
<dbReference type="InterPro" id="IPR013328">
    <property type="entry name" value="6PGD_dom2"/>
</dbReference>
<dbReference type="InterPro" id="IPR006168">
    <property type="entry name" value="G3P_DH_NAD-dep"/>
</dbReference>
<dbReference type="InterPro" id="IPR006109">
    <property type="entry name" value="G3P_DH_NAD-dep_C"/>
</dbReference>
<dbReference type="InterPro" id="IPR011128">
    <property type="entry name" value="G3P_DH_NAD-dep_N"/>
</dbReference>
<dbReference type="InterPro" id="IPR036291">
    <property type="entry name" value="NAD(P)-bd_dom_sf"/>
</dbReference>
<dbReference type="NCBIfam" id="NF000940">
    <property type="entry name" value="PRK00094.1-2"/>
    <property type="match status" value="1"/>
</dbReference>
<dbReference type="NCBIfam" id="NF000942">
    <property type="entry name" value="PRK00094.1-4"/>
    <property type="match status" value="1"/>
</dbReference>
<dbReference type="NCBIfam" id="NF009098">
    <property type="entry name" value="PRK12439.1"/>
    <property type="match status" value="1"/>
</dbReference>
<dbReference type="PANTHER" id="PTHR11728">
    <property type="entry name" value="GLYCEROL-3-PHOSPHATE DEHYDROGENASE"/>
    <property type="match status" value="1"/>
</dbReference>
<dbReference type="PANTHER" id="PTHR11728:SF1">
    <property type="entry name" value="GLYCEROL-3-PHOSPHATE DEHYDROGENASE [NAD(+)] 2, CHLOROPLASTIC"/>
    <property type="match status" value="1"/>
</dbReference>
<dbReference type="Pfam" id="PF07479">
    <property type="entry name" value="NAD_Gly3P_dh_C"/>
    <property type="match status" value="1"/>
</dbReference>
<dbReference type="Pfam" id="PF01210">
    <property type="entry name" value="NAD_Gly3P_dh_N"/>
    <property type="match status" value="1"/>
</dbReference>
<dbReference type="PIRSF" id="PIRSF000114">
    <property type="entry name" value="Glycerol-3-P_dh"/>
    <property type="match status" value="1"/>
</dbReference>
<dbReference type="PRINTS" id="PR00077">
    <property type="entry name" value="GPDHDRGNASE"/>
</dbReference>
<dbReference type="SUPFAM" id="SSF48179">
    <property type="entry name" value="6-phosphogluconate dehydrogenase C-terminal domain-like"/>
    <property type="match status" value="1"/>
</dbReference>
<dbReference type="SUPFAM" id="SSF51735">
    <property type="entry name" value="NAD(P)-binding Rossmann-fold domains"/>
    <property type="match status" value="1"/>
</dbReference>
<dbReference type="PROSITE" id="PS00957">
    <property type="entry name" value="NAD_G3PDH"/>
    <property type="match status" value="1"/>
</dbReference>
<protein>
    <recommendedName>
        <fullName evidence="1">Glycerol-3-phosphate dehydrogenase [NAD(P)+] 2</fullName>
        <ecNumber evidence="1">1.1.1.94</ecNumber>
    </recommendedName>
    <alternativeName>
        <fullName evidence="1">NAD(P)(+)-dependent glycerol-3-phosphate dehydrogenase 2</fullName>
    </alternativeName>
    <alternativeName>
        <fullName evidence="1">NAD(P)H-dependent dihydroxyacetone-phosphate reductase 2</fullName>
    </alternativeName>
</protein>
<sequence>MRLKVGLLGGGSWGTTVAAVVSRNAPIQLWARDAETVEGINRDHENRKYLPGITLPPALGATSDMAEVVAGADVLVMAVPSHSFRSVLEEARDHIRPWVPVISLTKGLELASGKRMTELIEDVLPGHPVGVLTGPNLAREIMAGQAAASVLSMADEIVVRALQPLFHSGLFRVYTNTDLLGCELGGVLKNIIAIAVGMGDGLGAGDNTRAGLMTRGLAEITRLGVAMGGRPETFAGLTGMGDLIATCTSPLSRNRHVGVELGKGRPIDAIIAGMNMVAEGVKSAPTVMALADRHGIAMPIARDVFDVTQGKRTAMDVFRGLLKSSVGDEAHPG</sequence>
<name>GPDA2_SPHAL</name>
<accession>Q1GWP9</accession>
<gene>
    <name evidence="1" type="primary">gpsA2</name>
    <name type="ordered locus">Sala_0199</name>
</gene>
<evidence type="ECO:0000255" key="1">
    <source>
        <dbReference type="HAMAP-Rule" id="MF_00394"/>
    </source>
</evidence>
<proteinExistence type="inferred from homology"/>
<organism>
    <name type="scientific">Sphingopyxis alaskensis (strain DSM 13593 / LMG 18877 / RB2256)</name>
    <name type="common">Sphingomonas alaskensis</name>
    <dbReference type="NCBI Taxonomy" id="317655"/>
    <lineage>
        <taxon>Bacteria</taxon>
        <taxon>Pseudomonadati</taxon>
        <taxon>Pseudomonadota</taxon>
        <taxon>Alphaproteobacteria</taxon>
        <taxon>Sphingomonadales</taxon>
        <taxon>Sphingomonadaceae</taxon>
        <taxon>Sphingopyxis</taxon>
    </lineage>
</organism>
<keyword id="KW-0963">Cytoplasm</keyword>
<keyword id="KW-0444">Lipid biosynthesis</keyword>
<keyword id="KW-0443">Lipid metabolism</keyword>
<keyword id="KW-0520">NAD</keyword>
<keyword id="KW-0521">NADP</keyword>
<keyword id="KW-0547">Nucleotide-binding</keyword>
<keyword id="KW-0560">Oxidoreductase</keyword>
<keyword id="KW-0594">Phospholipid biosynthesis</keyword>
<keyword id="KW-1208">Phospholipid metabolism</keyword>
<keyword id="KW-1185">Reference proteome</keyword>
<comment type="function">
    <text evidence="1">Catalyzes the reduction of the glycolytic intermediate dihydroxyacetone phosphate (DHAP) to sn-glycerol 3-phosphate (G3P), the key precursor for phospholipid synthesis.</text>
</comment>
<comment type="catalytic activity">
    <reaction evidence="1">
        <text>sn-glycerol 3-phosphate + NAD(+) = dihydroxyacetone phosphate + NADH + H(+)</text>
        <dbReference type="Rhea" id="RHEA:11092"/>
        <dbReference type="ChEBI" id="CHEBI:15378"/>
        <dbReference type="ChEBI" id="CHEBI:57540"/>
        <dbReference type="ChEBI" id="CHEBI:57597"/>
        <dbReference type="ChEBI" id="CHEBI:57642"/>
        <dbReference type="ChEBI" id="CHEBI:57945"/>
        <dbReference type="EC" id="1.1.1.94"/>
    </reaction>
    <physiologicalReaction direction="right-to-left" evidence="1">
        <dbReference type="Rhea" id="RHEA:11094"/>
    </physiologicalReaction>
</comment>
<comment type="catalytic activity">
    <reaction evidence="1">
        <text>sn-glycerol 3-phosphate + NADP(+) = dihydroxyacetone phosphate + NADPH + H(+)</text>
        <dbReference type="Rhea" id="RHEA:11096"/>
        <dbReference type="ChEBI" id="CHEBI:15378"/>
        <dbReference type="ChEBI" id="CHEBI:57597"/>
        <dbReference type="ChEBI" id="CHEBI:57642"/>
        <dbReference type="ChEBI" id="CHEBI:57783"/>
        <dbReference type="ChEBI" id="CHEBI:58349"/>
        <dbReference type="EC" id="1.1.1.94"/>
    </reaction>
    <physiologicalReaction direction="right-to-left" evidence="1">
        <dbReference type="Rhea" id="RHEA:11098"/>
    </physiologicalReaction>
</comment>
<comment type="pathway">
    <text evidence="1">Membrane lipid metabolism; glycerophospholipid metabolism.</text>
</comment>
<comment type="subcellular location">
    <subcellularLocation>
        <location evidence="1">Cytoplasm</location>
    </subcellularLocation>
</comment>
<comment type="similarity">
    <text evidence="1">Belongs to the NAD-dependent glycerol-3-phosphate dehydrogenase family.</text>
</comment>